<comment type="function">
    <text evidence="1">Involved in unsaturated fatty acids biosynthesis. Catalyzes the dehydration of short chain beta-hydroxyacyl-ACPs and long chain saturated and unsaturated beta-hydroxyacyl-ACPs.</text>
</comment>
<comment type="catalytic activity">
    <reaction evidence="1">
        <text>a (3R)-hydroxyacyl-[ACP] = a (2E)-enoyl-[ACP] + H2O</text>
        <dbReference type="Rhea" id="RHEA:13097"/>
        <dbReference type="Rhea" id="RHEA-COMP:9925"/>
        <dbReference type="Rhea" id="RHEA-COMP:9945"/>
        <dbReference type="ChEBI" id="CHEBI:15377"/>
        <dbReference type="ChEBI" id="CHEBI:78784"/>
        <dbReference type="ChEBI" id="CHEBI:78827"/>
        <dbReference type="EC" id="4.2.1.59"/>
    </reaction>
</comment>
<comment type="subcellular location">
    <subcellularLocation>
        <location evidence="1">Cytoplasm</location>
    </subcellularLocation>
</comment>
<comment type="similarity">
    <text evidence="1">Belongs to the thioester dehydratase family. FabZ subfamily.</text>
</comment>
<comment type="sequence caution" evidence="2">
    <conflict type="erroneous initiation">
        <sequence resource="EMBL-CDS" id="CAE36840"/>
    </conflict>
</comment>
<accession>Q7WA49</accession>
<dbReference type="EC" id="4.2.1.59" evidence="1"/>
<dbReference type="EMBL" id="BX640427">
    <property type="protein sequence ID" value="CAE36840.1"/>
    <property type="status" value="ALT_INIT"/>
    <property type="molecule type" value="Genomic_DNA"/>
</dbReference>
<dbReference type="RefSeq" id="WP_041937149.1">
    <property type="nucleotide sequence ID" value="NC_002928.3"/>
</dbReference>
<dbReference type="SMR" id="Q7WA49"/>
<dbReference type="GeneID" id="93203297"/>
<dbReference type="KEGG" id="bpa:BPP1538"/>
<dbReference type="HOGENOM" id="CLU_078912_3_0_4"/>
<dbReference type="Proteomes" id="UP000001421">
    <property type="component" value="Chromosome"/>
</dbReference>
<dbReference type="GO" id="GO:0005737">
    <property type="term" value="C:cytoplasm"/>
    <property type="evidence" value="ECO:0007669"/>
    <property type="project" value="UniProtKB-SubCell"/>
</dbReference>
<dbReference type="GO" id="GO:0016020">
    <property type="term" value="C:membrane"/>
    <property type="evidence" value="ECO:0007669"/>
    <property type="project" value="GOC"/>
</dbReference>
<dbReference type="GO" id="GO:0019171">
    <property type="term" value="F:(3R)-hydroxyacyl-[acyl-carrier-protein] dehydratase activity"/>
    <property type="evidence" value="ECO:0007669"/>
    <property type="project" value="UniProtKB-EC"/>
</dbReference>
<dbReference type="GO" id="GO:0006633">
    <property type="term" value="P:fatty acid biosynthetic process"/>
    <property type="evidence" value="ECO:0007669"/>
    <property type="project" value="UniProtKB-UniRule"/>
</dbReference>
<dbReference type="GO" id="GO:0009245">
    <property type="term" value="P:lipid A biosynthetic process"/>
    <property type="evidence" value="ECO:0007669"/>
    <property type="project" value="UniProtKB-UniRule"/>
</dbReference>
<dbReference type="CDD" id="cd01288">
    <property type="entry name" value="FabZ"/>
    <property type="match status" value="1"/>
</dbReference>
<dbReference type="FunFam" id="3.10.129.10:FF:000001">
    <property type="entry name" value="3-hydroxyacyl-[acyl-carrier-protein] dehydratase FabZ"/>
    <property type="match status" value="1"/>
</dbReference>
<dbReference type="Gene3D" id="3.10.129.10">
    <property type="entry name" value="Hotdog Thioesterase"/>
    <property type="match status" value="1"/>
</dbReference>
<dbReference type="HAMAP" id="MF_00406">
    <property type="entry name" value="FabZ"/>
    <property type="match status" value="1"/>
</dbReference>
<dbReference type="InterPro" id="IPR013114">
    <property type="entry name" value="FabA_FabZ"/>
</dbReference>
<dbReference type="InterPro" id="IPR010084">
    <property type="entry name" value="FabZ"/>
</dbReference>
<dbReference type="InterPro" id="IPR029069">
    <property type="entry name" value="HotDog_dom_sf"/>
</dbReference>
<dbReference type="NCBIfam" id="TIGR01750">
    <property type="entry name" value="fabZ"/>
    <property type="match status" value="1"/>
</dbReference>
<dbReference type="NCBIfam" id="NF000582">
    <property type="entry name" value="PRK00006.1"/>
    <property type="match status" value="1"/>
</dbReference>
<dbReference type="PANTHER" id="PTHR30272">
    <property type="entry name" value="3-HYDROXYACYL-[ACYL-CARRIER-PROTEIN] DEHYDRATASE"/>
    <property type="match status" value="1"/>
</dbReference>
<dbReference type="PANTHER" id="PTHR30272:SF1">
    <property type="entry name" value="3-HYDROXYACYL-[ACYL-CARRIER-PROTEIN] DEHYDRATASE"/>
    <property type="match status" value="1"/>
</dbReference>
<dbReference type="Pfam" id="PF07977">
    <property type="entry name" value="FabA"/>
    <property type="match status" value="1"/>
</dbReference>
<dbReference type="SUPFAM" id="SSF54637">
    <property type="entry name" value="Thioesterase/thiol ester dehydrase-isomerase"/>
    <property type="match status" value="1"/>
</dbReference>
<proteinExistence type="inferred from homology"/>
<organism>
    <name type="scientific">Bordetella parapertussis (strain 12822 / ATCC BAA-587 / NCTC 13253)</name>
    <dbReference type="NCBI Taxonomy" id="257311"/>
    <lineage>
        <taxon>Bacteria</taxon>
        <taxon>Pseudomonadati</taxon>
        <taxon>Pseudomonadota</taxon>
        <taxon>Betaproteobacteria</taxon>
        <taxon>Burkholderiales</taxon>
        <taxon>Alcaligenaceae</taxon>
        <taxon>Bordetella</taxon>
    </lineage>
</organism>
<keyword id="KW-0963">Cytoplasm</keyword>
<keyword id="KW-0441">Lipid A biosynthesis</keyword>
<keyword id="KW-0444">Lipid biosynthesis</keyword>
<keyword id="KW-0443">Lipid metabolism</keyword>
<keyword id="KW-0456">Lyase</keyword>
<gene>
    <name evidence="1" type="primary">fabZ</name>
    <name type="ordered locus">BPP1538</name>
</gene>
<reference key="1">
    <citation type="journal article" date="2003" name="Nat. Genet.">
        <title>Comparative analysis of the genome sequences of Bordetella pertussis, Bordetella parapertussis and Bordetella bronchiseptica.</title>
        <authorList>
            <person name="Parkhill J."/>
            <person name="Sebaihia M."/>
            <person name="Preston A."/>
            <person name="Murphy L.D."/>
            <person name="Thomson N.R."/>
            <person name="Harris D.E."/>
            <person name="Holden M.T.G."/>
            <person name="Churcher C.M."/>
            <person name="Bentley S.D."/>
            <person name="Mungall K.L."/>
            <person name="Cerdeno-Tarraga A.-M."/>
            <person name="Temple L."/>
            <person name="James K.D."/>
            <person name="Harris B."/>
            <person name="Quail M.A."/>
            <person name="Achtman M."/>
            <person name="Atkin R."/>
            <person name="Baker S."/>
            <person name="Basham D."/>
            <person name="Bason N."/>
            <person name="Cherevach I."/>
            <person name="Chillingworth T."/>
            <person name="Collins M."/>
            <person name="Cronin A."/>
            <person name="Davis P."/>
            <person name="Doggett J."/>
            <person name="Feltwell T."/>
            <person name="Goble A."/>
            <person name="Hamlin N."/>
            <person name="Hauser H."/>
            <person name="Holroyd S."/>
            <person name="Jagels K."/>
            <person name="Leather S."/>
            <person name="Moule S."/>
            <person name="Norberczak H."/>
            <person name="O'Neil S."/>
            <person name="Ormond D."/>
            <person name="Price C."/>
            <person name="Rabbinowitsch E."/>
            <person name="Rutter S."/>
            <person name="Sanders M."/>
            <person name="Saunders D."/>
            <person name="Seeger K."/>
            <person name="Sharp S."/>
            <person name="Simmonds M."/>
            <person name="Skelton J."/>
            <person name="Squares R."/>
            <person name="Squares S."/>
            <person name="Stevens K."/>
            <person name="Unwin L."/>
            <person name="Whitehead S."/>
            <person name="Barrell B.G."/>
            <person name="Maskell D.J."/>
        </authorList>
    </citation>
    <scope>NUCLEOTIDE SEQUENCE [LARGE SCALE GENOMIC DNA]</scope>
    <source>
        <strain>12822 / ATCC BAA-587 / NCTC 13253</strain>
    </source>
</reference>
<name>FABZ_BORPA</name>
<feature type="chain" id="PRO_0000091646" description="3-hydroxyacyl-[acyl-carrier-protein] dehydratase FabZ">
    <location>
        <begin position="1"/>
        <end position="151"/>
    </location>
</feature>
<feature type="active site" evidence="1">
    <location>
        <position position="49"/>
    </location>
</feature>
<evidence type="ECO:0000255" key="1">
    <source>
        <dbReference type="HAMAP-Rule" id="MF_00406"/>
    </source>
</evidence>
<evidence type="ECO:0000305" key="2"/>
<protein>
    <recommendedName>
        <fullName evidence="1">3-hydroxyacyl-[acyl-carrier-protein] dehydratase FabZ</fullName>
        <ecNumber evidence="1">4.2.1.59</ecNumber>
    </recommendedName>
    <alternativeName>
        <fullName evidence="1">(3R)-hydroxymyristoyl-[acyl-carrier-protein] dehydratase</fullName>
        <shortName evidence="1">(3R)-hydroxymyristoyl-ACP dehydrase</shortName>
    </alternativeName>
    <alternativeName>
        <fullName evidence="1">Beta-hydroxyacyl-ACP dehydratase</fullName>
    </alternativeName>
</protein>
<sequence>MELDIKGIMDRLPHRYPMLLIDRVLEMVPGKSIVAIKNVSINEPFFTGHFPHHPVMPGVLIVEAMAQASALFSFTDENGGLKCDGAKTAYYLVGIDGARFRKPVVPGDQLRLEVEAERLSCTICKYQGRALVDGQLVAEAKLMCAIRSLEE</sequence>